<evidence type="ECO:0000255" key="1"/>
<evidence type="ECO:0000255" key="2">
    <source>
        <dbReference type="PROSITE-ProRule" id="PRU00297"/>
    </source>
</evidence>
<evidence type="ECO:0000269" key="3">
    <source>
    </source>
</evidence>
<evidence type="ECO:0000305" key="4"/>
<comment type="function">
    <text>Removal of H(2)O(2), oxidation of toxic reductants, biosynthesis and degradation of lignin, suberization, auxin catabolism, response to environmental stresses such as wounding, pathogen attack and oxidative stress. These functions might be dependent on each isozyme/isoform in each plant tissue. Involved in the synthesis of highly polymerized lignins.</text>
</comment>
<comment type="catalytic activity">
    <reaction evidence="3">
        <text>2 a phenolic donor + H2O2 = 2 a phenolic radical donor + 2 H2O</text>
        <dbReference type="Rhea" id="RHEA:56136"/>
        <dbReference type="ChEBI" id="CHEBI:15377"/>
        <dbReference type="ChEBI" id="CHEBI:16240"/>
        <dbReference type="ChEBI" id="CHEBI:139520"/>
        <dbReference type="ChEBI" id="CHEBI:139521"/>
        <dbReference type="EC" id="1.11.1.7"/>
    </reaction>
</comment>
<comment type="cofactor">
    <cofactor evidence="2">
        <name>heme b</name>
        <dbReference type="ChEBI" id="CHEBI:60344"/>
    </cofactor>
    <text evidence="2">Binds 1 heme b (iron(II)-protoporphyrin IX) group per subunit.</text>
</comment>
<comment type="cofactor">
    <cofactor evidence="2">
        <name>Ca(2+)</name>
        <dbReference type="ChEBI" id="CHEBI:29108"/>
    </cofactor>
    <text evidence="2">Binds 2 calcium ions per subunit.</text>
</comment>
<comment type="biophysicochemical properties">
    <kinetics>
        <KM evidence="3">241 uM for p-coumaryl alcohol (in the presence of 10.2 uM H2O2, for a partially glycosylated enzyme)</KM>
        <KM evidence="3">432 uM for p-coumaryl alcohol (in the presence of 10.2 uM H2O2, for a fully glycosylated enzyme)</KM>
        <KM evidence="3">83 uM for coniferyl alcohol (in the presence of 10.2 uM H2O2, for a partially glycosylated enzyme)</KM>
        <KM evidence="3">124 uM for coniferyl alcohol (in the presence of 10.2 uM H2O2, for a fully glycosylated enzyme)</KM>
        <KM evidence="3">15 uM for sinapyl alcohol (in the presence of 10.2 uM H2O2, for a partially glycosylated enzyme)</KM>
        <KM evidence="3">13 uM for sinapyl alcohol (in the presence of 10.2 uM H2O2, for a fully glycosylated enzyme)</KM>
        <text>The full glycosylation reduces the affinity of the enzyme for both p-coumaryl and coniferyl, but not sinapyl, alcohol.</text>
    </kinetics>
</comment>
<comment type="subcellular location">
    <subcellularLocation>
        <location evidence="2">Secreted</location>
    </subcellularLocation>
</comment>
<comment type="tissue specificity">
    <text evidence="3">Expressed in tracheary elements, roots, young and old hypocotyls, and stems in the partially glycosylated form and in roots and young hypocotyls in the fully glycosylated form. None of the isoforms is significantly expressed in leaves or cotyledons.</text>
</comment>
<comment type="PTM">
    <text>N-glycosylated.</text>
</comment>
<comment type="mass spectrometry">
    <text>Deglycosylated form.</text>
</comment>
<comment type="mass spectrometry">
    <text>Partially glycosylated form.</text>
</comment>
<comment type="mass spectrometry">
    <text>Fully glycosylated form.</text>
</comment>
<comment type="similarity">
    <text evidence="2">Belongs to the peroxidase family. Classical plant (class III) peroxidase subfamily.</text>
</comment>
<comment type="caution">
    <text evidence="4">Four genes are encoding the same mature protein that may have different glycosylation degree. The two precursors produced differ by only one amino acid located in the signal peptide.</text>
</comment>
<organism>
    <name type="scientific">Zinnia elegans</name>
    <name type="common">Garden zinnia</name>
    <name type="synonym">Zinnia violacea</name>
    <dbReference type="NCBI Taxonomy" id="34245"/>
    <lineage>
        <taxon>Eukaryota</taxon>
        <taxon>Viridiplantae</taxon>
        <taxon>Streptophyta</taxon>
        <taxon>Embryophyta</taxon>
        <taxon>Tracheophyta</taxon>
        <taxon>Spermatophyta</taxon>
        <taxon>Magnoliopsida</taxon>
        <taxon>eudicotyledons</taxon>
        <taxon>Gunneridae</taxon>
        <taxon>Pentapetalae</taxon>
        <taxon>asterids</taxon>
        <taxon>campanulids</taxon>
        <taxon>Asterales</taxon>
        <taxon>Asteraceae</taxon>
        <taxon>Asteroideae</taxon>
        <taxon>Heliantheae alliance</taxon>
        <taxon>Heliantheae</taxon>
        <taxon>Zinnia</taxon>
    </lineage>
</organism>
<sequence>MSYHKSSGTILMVPLFMLLISVNYFMSCNAQLSTTFYDTTCPTALSTIRTSIRSSVSSNRRNAALVIRLLFHDCFVQGCDASLLLSGAGSERASPANDGVLGYEVIDAAKAAVERVCPGVVSCADILAVAARDASVAVGGPSWTVRLGRRDSTTSNAAQAATDLPRGNMVLSQLISNFANKGLNTREMVALSGSHTLGQARCIRFRGRIYNSTLRIEPNFNRSLSQACPPTGNDATLRPLDLVTPNSFDNNYYRNLVTSRGLLISDQVLFNADSTDSIVTEYVNNPATFAADFAAAMVKMSEIGVVTGTSGIVRTLCGNPS</sequence>
<keyword id="KW-0106">Calcium</keyword>
<keyword id="KW-0903">Direct protein sequencing</keyword>
<keyword id="KW-1015">Disulfide bond</keyword>
<keyword id="KW-0325">Glycoprotein</keyword>
<keyword id="KW-0349">Heme</keyword>
<keyword id="KW-0376">Hydrogen peroxide</keyword>
<keyword id="KW-0408">Iron</keyword>
<keyword id="KW-0479">Metal-binding</keyword>
<keyword id="KW-0560">Oxidoreductase</keyword>
<keyword id="KW-0575">Peroxidase</keyword>
<keyword id="KW-0873">Pyrrolidone carboxylic acid</keyword>
<keyword id="KW-0964">Secreted</keyword>
<keyword id="KW-0732">Signal</keyword>
<protein>
    <recommendedName>
        <fullName>Basic peroxidase</fullName>
        <ecNumber>1.11.1.7</ecNumber>
    </recommendedName>
    <alternativeName>
        <fullName>ZePrx33.44</fullName>
    </alternativeName>
    <alternativeName>
        <fullName>ZePrx34.70</fullName>
    </alternativeName>
</protein>
<feature type="signal peptide" evidence="3">
    <location>
        <begin position="1"/>
        <end position="30"/>
    </location>
</feature>
<feature type="chain" id="PRO_0000042696" description="Basic peroxidase">
    <location>
        <begin position="31"/>
        <end position="321"/>
    </location>
</feature>
<feature type="active site" description="Proton acceptor">
    <location>
        <position position="72"/>
    </location>
</feature>
<feature type="binding site" evidence="2">
    <location>
        <position position="73"/>
    </location>
    <ligand>
        <name>Ca(2+)</name>
        <dbReference type="ChEBI" id="CHEBI:29108"/>
        <label>1</label>
    </ligand>
</feature>
<feature type="binding site" evidence="2">
    <location>
        <position position="76"/>
    </location>
    <ligand>
        <name>Ca(2+)</name>
        <dbReference type="ChEBI" id="CHEBI:29108"/>
        <label>1</label>
    </ligand>
</feature>
<feature type="binding site" evidence="2">
    <location>
        <position position="78"/>
    </location>
    <ligand>
        <name>Ca(2+)</name>
        <dbReference type="ChEBI" id="CHEBI:29108"/>
        <label>1</label>
    </ligand>
</feature>
<feature type="binding site" evidence="2">
    <location>
        <position position="80"/>
    </location>
    <ligand>
        <name>Ca(2+)</name>
        <dbReference type="ChEBI" id="CHEBI:29108"/>
        <label>1</label>
    </ligand>
</feature>
<feature type="binding site" evidence="2">
    <location>
        <position position="82"/>
    </location>
    <ligand>
        <name>Ca(2+)</name>
        <dbReference type="ChEBI" id="CHEBI:29108"/>
        <label>1</label>
    </ligand>
</feature>
<feature type="binding site" evidence="2">
    <location>
        <position position="165"/>
    </location>
    <ligand>
        <name>substrate</name>
    </ligand>
</feature>
<feature type="binding site" description="axial binding residue">
    <location>
        <position position="195"/>
    </location>
    <ligand>
        <name>heme b</name>
        <dbReference type="ChEBI" id="CHEBI:60344"/>
    </ligand>
    <ligandPart>
        <name>Fe</name>
        <dbReference type="ChEBI" id="CHEBI:18248"/>
    </ligandPart>
</feature>
<feature type="binding site" evidence="2">
    <location>
        <position position="196"/>
    </location>
    <ligand>
        <name>Ca(2+)</name>
        <dbReference type="ChEBI" id="CHEBI:29108"/>
        <label>2</label>
    </ligand>
</feature>
<feature type="binding site" evidence="2">
    <location>
        <position position="241"/>
    </location>
    <ligand>
        <name>Ca(2+)</name>
        <dbReference type="ChEBI" id="CHEBI:29108"/>
        <label>2</label>
    </ligand>
</feature>
<feature type="binding site" evidence="2">
    <location>
        <position position="244"/>
    </location>
    <ligand>
        <name>Ca(2+)</name>
        <dbReference type="ChEBI" id="CHEBI:29108"/>
        <label>2</label>
    </ligand>
</feature>
<feature type="binding site" evidence="2">
    <location>
        <position position="249"/>
    </location>
    <ligand>
        <name>Ca(2+)</name>
        <dbReference type="ChEBI" id="CHEBI:29108"/>
        <label>2</label>
    </ligand>
</feature>
<feature type="site" description="Transition state stabilizer" evidence="2">
    <location>
        <position position="68"/>
    </location>
</feature>
<feature type="modified residue" description="Pyrrolidone carboxylic acid" evidence="2 3">
    <location>
        <position position="31"/>
    </location>
</feature>
<feature type="glycosylation site" description="N-linked (GlcNAc...) asparagine" evidence="1">
    <location>
        <position position="211"/>
    </location>
</feature>
<feature type="glycosylation site" description="N-linked (GlcNAc...) asparagine" evidence="1">
    <location>
        <position position="221"/>
    </location>
</feature>
<feature type="disulfide bond" evidence="2">
    <location>
        <begin position="41"/>
        <end position="117"/>
    </location>
</feature>
<feature type="disulfide bond" evidence="2">
    <location>
        <begin position="74"/>
        <end position="79"/>
    </location>
</feature>
<feature type="disulfide bond" evidence="2">
    <location>
        <begin position="123"/>
        <end position="317"/>
    </location>
</feature>
<feature type="disulfide bond" evidence="2">
    <location>
        <begin position="202"/>
        <end position="228"/>
    </location>
</feature>
<gene>
    <name type="primary">POD1</name>
</gene>
<gene>
    <name type="primary">POD2</name>
</gene>
<accession>Q4W1I8</accession>
<accession>P84332</accession>
<accession>P84333</accession>
<name>PER1_ZINEL</name>
<proteinExistence type="evidence at protein level"/>
<dbReference type="EC" id="1.11.1.7"/>
<dbReference type="EMBL" id="AJ880395">
    <property type="protein sequence ID" value="CAI54302.1"/>
    <property type="molecule type" value="mRNA"/>
</dbReference>
<dbReference type="EMBL" id="AJ880393">
    <property type="protein sequence ID" value="CAI54300.1"/>
    <property type="molecule type" value="mRNA"/>
</dbReference>
<dbReference type="SMR" id="Q4W1I8"/>
<dbReference type="PeroxiBase" id="2626">
    <property type="entry name" value="ZePrx15"/>
</dbReference>
<dbReference type="GlyCosmos" id="Q4W1I8">
    <property type="glycosylation" value="2 sites, No reported glycans"/>
</dbReference>
<dbReference type="GO" id="GO:0005576">
    <property type="term" value="C:extracellular region"/>
    <property type="evidence" value="ECO:0007669"/>
    <property type="project" value="UniProtKB-SubCell"/>
</dbReference>
<dbReference type="GO" id="GO:0020037">
    <property type="term" value="F:heme binding"/>
    <property type="evidence" value="ECO:0007669"/>
    <property type="project" value="InterPro"/>
</dbReference>
<dbReference type="GO" id="GO:0140825">
    <property type="term" value="F:lactoperoxidase activity"/>
    <property type="evidence" value="ECO:0007669"/>
    <property type="project" value="UniProtKB-EC"/>
</dbReference>
<dbReference type="GO" id="GO:0046872">
    <property type="term" value="F:metal ion binding"/>
    <property type="evidence" value="ECO:0007669"/>
    <property type="project" value="UniProtKB-KW"/>
</dbReference>
<dbReference type="GO" id="GO:0042744">
    <property type="term" value="P:hydrogen peroxide catabolic process"/>
    <property type="evidence" value="ECO:0007669"/>
    <property type="project" value="UniProtKB-KW"/>
</dbReference>
<dbReference type="GO" id="GO:0006979">
    <property type="term" value="P:response to oxidative stress"/>
    <property type="evidence" value="ECO:0007669"/>
    <property type="project" value="InterPro"/>
</dbReference>
<dbReference type="CDD" id="cd00693">
    <property type="entry name" value="secretory_peroxidase"/>
    <property type="match status" value="1"/>
</dbReference>
<dbReference type="FunFam" id="1.10.420.10:FF:000001">
    <property type="entry name" value="Peroxidase"/>
    <property type="match status" value="1"/>
</dbReference>
<dbReference type="FunFam" id="1.10.520.10:FF:000009">
    <property type="entry name" value="Peroxidase"/>
    <property type="match status" value="1"/>
</dbReference>
<dbReference type="Gene3D" id="1.10.520.10">
    <property type="match status" value="1"/>
</dbReference>
<dbReference type="Gene3D" id="1.10.420.10">
    <property type="entry name" value="Peroxidase, domain 2"/>
    <property type="match status" value="1"/>
</dbReference>
<dbReference type="InterPro" id="IPR002016">
    <property type="entry name" value="Haem_peroxidase"/>
</dbReference>
<dbReference type="InterPro" id="IPR010255">
    <property type="entry name" value="Haem_peroxidase_sf"/>
</dbReference>
<dbReference type="InterPro" id="IPR000823">
    <property type="entry name" value="Peroxidase_pln"/>
</dbReference>
<dbReference type="InterPro" id="IPR019794">
    <property type="entry name" value="Peroxidases_AS"/>
</dbReference>
<dbReference type="InterPro" id="IPR019793">
    <property type="entry name" value="Peroxidases_heam-ligand_BS"/>
</dbReference>
<dbReference type="InterPro" id="IPR033905">
    <property type="entry name" value="Secretory_peroxidase"/>
</dbReference>
<dbReference type="PANTHER" id="PTHR31388:SF215">
    <property type="entry name" value="PEROXIDASE"/>
    <property type="match status" value="1"/>
</dbReference>
<dbReference type="PANTHER" id="PTHR31388">
    <property type="entry name" value="PEROXIDASE 72-RELATED"/>
    <property type="match status" value="1"/>
</dbReference>
<dbReference type="Pfam" id="PF00141">
    <property type="entry name" value="peroxidase"/>
    <property type="match status" value="1"/>
</dbReference>
<dbReference type="PRINTS" id="PR00458">
    <property type="entry name" value="PEROXIDASE"/>
</dbReference>
<dbReference type="PRINTS" id="PR00461">
    <property type="entry name" value="PLPEROXIDASE"/>
</dbReference>
<dbReference type="SUPFAM" id="SSF48113">
    <property type="entry name" value="Heme-dependent peroxidases"/>
    <property type="match status" value="1"/>
</dbReference>
<dbReference type="PROSITE" id="PS00435">
    <property type="entry name" value="PEROXIDASE_1"/>
    <property type="match status" value="1"/>
</dbReference>
<dbReference type="PROSITE" id="PS00436">
    <property type="entry name" value="PEROXIDASE_2"/>
    <property type="match status" value="1"/>
</dbReference>
<dbReference type="PROSITE" id="PS50873">
    <property type="entry name" value="PEROXIDASE_4"/>
    <property type="match status" value="1"/>
</dbReference>
<reference key="1">
    <citation type="journal article" date="2005" name="Plant Physiol.">
        <title>Cloning and molecular characterization of the basic peroxidase isoenzyme from Zinnia elegans, an enzyme involved in lignin biosynthesis.</title>
        <authorList>
            <person name="Gabaldon C."/>
            <person name="Lopez-Serrano M."/>
            <person name="Pedreno M.A."/>
            <person name="Barcelo A.R."/>
        </authorList>
    </citation>
    <scope>NUCLEOTIDE SEQUENCE [MRNA]</scope>
    <scope>PROTEIN SEQUENCE OF 31-43; 133-146; 186-201 AND 297-313</scope>
    <scope>TISSUE SPECIFICITY</scope>
    <scope>CATALYTIC ACTIVITY</scope>
    <scope>BIOPHYSICOCHEMICAL PROPERTIES</scope>
    <scope>PYROGLUTAMATE FORMATION AT GLN-31</scope>
    <scope>MASS SPECTROMETRY</scope>
    <source>
        <strain>cv. Envy</strain>
        <tissue>Callus</tissue>
    </source>
</reference>